<comment type="function">
    <text evidence="1">Catalyzes the formation of 5-methyl-uridine at position 1939 (m5U1939) in 23S rRNA.</text>
</comment>
<comment type="catalytic activity">
    <reaction evidence="1">
        <text>uridine(1939) in 23S rRNA + S-adenosyl-L-methionine = 5-methyluridine(1939) in 23S rRNA + S-adenosyl-L-homocysteine + H(+)</text>
        <dbReference type="Rhea" id="RHEA:42908"/>
        <dbReference type="Rhea" id="RHEA-COMP:10278"/>
        <dbReference type="Rhea" id="RHEA-COMP:10279"/>
        <dbReference type="ChEBI" id="CHEBI:15378"/>
        <dbReference type="ChEBI" id="CHEBI:57856"/>
        <dbReference type="ChEBI" id="CHEBI:59789"/>
        <dbReference type="ChEBI" id="CHEBI:65315"/>
        <dbReference type="ChEBI" id="CHEBI:74447"/>
        <dbReference type="EC" id="2.1.1.190"/>
    </reaction>
</comment>
<comment type="similarity">
    <text evidence="1">Belongs to the class I-like SAM-binding methyltransferase superfamily. RNA M5U methyltransferase family. RlmD subfamily.</text>
</comment>
<protein>
    <recommendedName>
        <fullName evidence="1">23S rRNA (uracil(1939)-C(5))-methyltransferase RlmD</fullName>
        <ecNumber evidence="1">2.1.1.190</ecNumber>
    </recommendedName>
    <alternativeName>
        <fullName evidence="1">23S rRNA(m5U1939)-methyltransferase</fullName>
    </alternativeName>
</protein>
<evidence type="ECO:0000255" key="1">
    <source>
        <dbReference type="HAMAP-Rule" id="MF_01010"/>
    </source>
</evidence>
<keyword id="KW-0004">4Fe-4S</keyword>
<keyword id="KW-0408">Iron</keyword>
<keyword id="KW-0411">Iron-sulfur</keyword>
<keyword id="KW-0479">Metal-binding</keyword>
<keyword id="KW-0489">Methyltransferase</keyword>
<keyword id="KW-0698">rRNA processing</keyword>
<keyword id="KW-0949">S-adenosyl-L-methionine</keyword>
<keyword id="KW-0808">Transferase</keyword>
<reference key="1">
    <citation type="journal article" date="2013" name="Proc. Natl. Acad. Sci. U.S.A.">
        <title>Polynucleobacter necessarius, a model for genome reduction in both free-living and symbiotic bacteria.</title>
        <authorList>
            <person name="Boscaro V."/>
            <person name="Felletti M."/>
            <person name="Vannini C."/>
            <person name="Ackerman M.S."/>
            <person name="Chain P.S."/>
            <person name="Malfatti S."/>
            <person name="Vergez L.M."/>
            <person name="Shin M."/>
            <person name="Doak T.G."/>
            <person name="Lynch M."/>
            <person name="Petroni G."/>
        </authorList>
    </citation>
    <scope>NUCLEOTIDE SEQUENCE [LARGE SCALE GENOMIC DNA]</scope>
    <source>
        <strain>STIR1</strain>
    </source>
</reference>
<dbReference type="EC" id="2.1.1.190" evidence="1"/>
<dbReference type="EMBL" id="CP001010">
    <property type="protein sequence ID" value="ACB43897.1"/>
    <property type="molecule type" value="Genomic_DNA"/>
</dbReference>
<dbReference type="SMR" id="B1XU70"/>
<dbReference type="STRING" id="452638.Pnec_0660"/>
<dbReference type="KEGG" id="pne:Pnec_0660"/>
<dbReference type="eggNOG" id="COG2265">
    <property type="taxonomic scope" value="Bacteria"/>
</dbReference>
<dbReference type="HOGENOM" id="CLU_014689_8_2_4"/>
<dbReference type="OrthoDB" id="9804590at2"/>
<dbReference type="GO" id="GO:0051539">
    <property type="term" value="F:4 iron, 4 sulfur cluster binding"/>
    <property type="evidence" value="ECO:0007669"/>
    <property type="project" value="UniProtKB-KW"/>
</dbReference>
<dbReference type="GO" id="GO:0005506">
    <property type="term" value="F:iron ion binding"/>
    <property type="evidence" value="ECO:0007669"/>
    <property type="project" value="UniProtKB-UniRule"/>
</dbReference>
<dbReference type="GO" id="GO:0003723">
    <property type="term" value="F:RNA binding"/>
    <property type="evidence" value="ECO:0007669"/>
    <property type="project" value="InterPro"/>
</dbReference>
<dbReference type="GO" id="GO:0070041">
    <property type="term" value="F:rRNA (uridine-C5-)-methyltransferase activity"/>
    <property type="evidence" value="ECO:0007669"/>
    <property type="project" value="UniProtKB-UniRule"/>
</dbReference>
<dbReference type="GO" id="GO:0070475">
    <property type="term" value="P:rRNA base methylation"/>
    <property type="evidence" value="ECO:0007669"/>
    <property type="project" value="TreeGrafter"/>
</dbReference>
<dbReference type="CDD" id="cd02440">
    <property type="entry name" value="AdoMet_MTases"/>
    <property type="match status" value="1"/>
</dbReference>
<dbReference type="Gene3D" id="2.40.50.1070">
    <property type="match status" value="1"/>
</dbReference>
<dbReference type="Gene3D" id="2.40.50.140">
    <property type="entry name" value="Nucleic acid-binding proteins"/>
    <property type="match status" value="1"/>
</dbReference>
<dbReference type="Gene3D" id="3.40.50.150">
    <property type="entry name" value="Vaccinia Virus protein VP39"/>
    <property type="match status" value="1"/>
</dbReference>
<dbReference type="HAMAP" id="MF_01010">
    <property type="entry name" value="23SrRNA_methyltr_RlmD"/>
    <property type="match status" value="1"/>
</dbReference>
<dbReference type="InterPro" id="IPR001566">
    <property type="entry name" value="23S_rRNA_MeTrfase_RlmD"/>
</dbReference>
<dbReference type="InterPro" id="IPR030391">
    <property type="entry name" value="MeTrfase_TrmA_CS"/>
</dbReference>
<dbReference type="InterPro" id="IPR012340">
    <property type="entry name" value="NA-bd_OB-fold"/>
</dbReference>
<dbReference type="InterPro" id="IPR029063">
    <property type="entry name" value="SAM-dependent_MTases_sf"/>
</dbReference>
<dbReference type="InterPro" id="IPR010280">
    <property type="entry name" value="U5_MeTrfase_fam"/>
</dbReference>
<dbReference type="NCBIfam" id="NF009639">
    <property type="entry name" value="PRK13168.1"/>
    <property type="match status" value="1"/>
</dbReference>
<dbReference type="NCBIfam" id="TIGR00479">
    <property type="entry name" value="rumA"/>
    <property type="match status" value="1"/>
</dbReference>
<dbReference type="PANTHER" id="PTHR11061:SF49">
    <property type="entry name" value="23S RRNA (URACIL(1939)-C(5))-METHYLTRANSFERASE RLMD"/>
    <property type="match status" value="1"/>
</dbReference>
<dbReference type="PANTHER" id="PTHR11061">
    <property type="entry name" value="RNA M5U METHYLTRANSFERASE"/>
    <property type="match status" value="1"/>
</dbReference>
<dbReference type="Pfam" id="PF05958">
    <property type="entry name" value="tRNA_U5-meth_tr"/>
    <property type="match status" value="1"/>
</dbReference>
<dbReference type="SUPFAM" id="SSF50249">
    <property type="entry name" value="Nucleic acid-binding proteins"/>
    <property type="match status" value="1"/>
</dbReference>
<dbReference type="SUPFAM" id="SSF53335">
    <property type="entry name" value="S-adenosyl-L-methionine-dependent methyltransferases"/>
    <property type="match status" value="1"/>
</dbReference>
<dbReference type="PROSITE" id="PS51687">
    <property type="entry name" value="SAM_MT_RNA_M5U"/>
    <property type="match status" value="1"/>
</dbReference>
<dbReference type="PROSITE" id="PS01231">
    <property type="entry name" value="TRMA_2"/>
    <property type="match status" value="1"/>
</dbReference>
<accession>B1XU70</accession>
<gene>
    <name evidence="1" type="primary">rlmD</name>
    <name type="ordered locus">Pnec_0660</name>
</gene>
<organism>
    <name type="scientific">Polynucleobacter necessarius subsp. necessarius (strain STIR1)</name>
    <dbReference type="NCBI Taxonomy" id="452638"/>
    <lineage>
        <taxon>Bacteria</taxon>
        <taxon>Pseudomonadati</taxon>
        <taxon>Pseudomonadota</taxon>
        <taxon>Betaproteobacteria</taxon>
        <taxon>Burkholderiales</taxon>
        <taxon>Burkholderiaceae</taxon>
        <taxon>Polynucleobacter</taxon>
    </lineage>
</organism>
<proteinExistence type="inferred from homology"/>
<name>RLMD_POLNS</name>
<feature type="chain" id="PRO_0000414810" description="23S rRNA (uracil(1939)-C(5))-methyltransferase RlmD">
    <location>
        <begin position="1"/>
        <end position="475"/>
    </location>
</feature>
<feature type="domain" description="TRAM" evidence="1">
    <location>
        <begin position="1"/>
        <end position="76"/>
    </location>
</feature>
<feature type="active site" description="Nucleophile" evidence="1">
    <location>
        <position position="431"/>
    </location>
</feature>
<feature type="binding site" evidence="1">
    <location>
        <position position="89"/>
    </location>
    <ligand>
        <name>[4Fe-4S] cluster</name>
        <dbReference type="ChEBI" id="CHEBI:49883"/>
    </ligand>
</feature>
<feature type="binding site" evidence="1">
    <location>
        <position position="95"/>
    </location>
    <ligand>
        <name>[4Fe-4S] cluster</name>
        <dbReference type="ChEBI" id="CHEBI:49883"/>
    </ligand>
</feature>
<feature type="binding site" evidence="1">
    <location>
        <position position="98"/>
    </location>
    <ligand>
        <name>[4Fe-4S] cluster</name>
        <dbReference type="ChEBI" id="CHEBI:49883"/>
    </ligand>
</feature>
<feature type="binding site" evidence="1">
    <location>
        <position position="178"/>
    </location>
    <ligand>
        <name>[4Fe-4S] cluster</name>
        <dbReference type="ChEBI" id="CHEBI:49883"/>
    </ligand>
</feature>
<feature type="binding site" evidence="1">
    <location>
        <position position="299"/>
    </location>
    <ligand>
        <name>S-adenosyl-L-methionine</name>
        <dbReference type="ChEBI" id="CHEBI:59789"/>
    </ligand>
</feature>
<feature type="binding site" evidence="1">
    <location>
        <position position="328"/>
    </location>
    <ligand>
        <name>S-adenosyl-L-methionine</name>
        <dbReference type="ChEBI" id="CHEBI:59789"/>
    </ligand>
</feature>
<feature type="binding site" evidence="1">
    <location>
        <position position="333"/>
    </location>
    <ligand>
        <name>S-adenosyl-L-methionine</name>
        <dbReference type="ChEBI" id="CHEBI:59789"/>
    </ligand>
</feature>
<feature type="binding site" evidence="1">
    <location>
        <position position="349"/>
    </location>
    <ligand>
        <name>S-adenosyl-L-methionine</name>
        <dbReference type="ChEBI" id="CHEBI:59789"/>
    </ligand>
</feature>
<feature type="binding site" evidence="1">
    <location>
        <position position="377"/>
    </location>
    <ligand>
        <name>S-adenosyl-L-methionine</name>
        <dbReference type="ChEBI" id="CHEBI:59789"/>
    </ligand>
</feature>
<feature type="binding site" evidence="1">
    <location>
        <position position="398"/>
    </location>
    <ligand>
        <name>S-adenosyl-L-methionine</name>
        <dbReference type="ChEBI" id="CHEBI:59789"/>
    </ligand>
</feature>
<sequence length="475" mass="52975">MHRGDKPVNIEVAEPITVEVLDLDAQGIARLAPSEEEAAQDQSGKVIFIKGALPTELVTYTVTSDKSRFSKAKVREILKPAVFRAEPKCAAFGICGGCTMQHLDIRAQVAMKQRVLEDDLQHIAKVKSEEILCPMGGPTWEYRHRARLSAVNRSIKKGTVLIGFHEGKSGYVADMLACEILPKHVSDLLPEMRKLVMGLSIVDRMPQIEIAIGEPEDAQSDDPQKSKPVTALVFRNLKPLTTEDEQLLRAFADQHEVWIWLQPKGIETIAPFYPLTGKLCYRLPEFEIEMPFKPCDFTQVNHMMNRALVSRAIRLLEVQPTDRVLDLFCGIGNFTLPLARKAKQVLGIEGLESLTARAKSNAQHNGLSDKASFMQSDLFEVTSETVASWGGAERWLMDPPRKGAMDICKALAELHLQQSDLLPERIVYVSCNPKTLARDVEILCHQAGYRLSSAGIINMFPHTSHVESMVVFDRA</sequence>